<accession>Q6WNQ9</accession>
<comment type="function">
    <text evidence="4">Involved in the biosynthesis of the pterocarpin phytoalexins. Acts on isoflavones with a 4'-methoxy group on the B-ring, such as biochanin A, formononetin and 2'-hydroxyformononetin. Has a low activity with daidzein and pseudobaptigenin, and no activity with the 7-O-methylated isoflavonoids isoformononetin and prunetin.</text>
</comment>
<comment type="catalytic activity">
    <reaction evidence="4">
        <text>formononetin + reduced [NADPH--hemoprotein reductase] + O2 = calycosin + oxidized [NADPH--hemoprotein reductase] + H2O + H(+)</text>
        <dbReference type="Rhea" id="RHEA:22960"/>
        <dbReference type="Rhea" id="RHEA-COMP:11964"/>
        <dbReference type="Rhea" id="RHEA-COMP:11965"/>
        <dbReference type="ChEBI" id="CHEBI:15377"/>
        <dbReference type="ChEBI" id="CHEBI:15378"/>
        <dbReference type="ChEBI" id="CHEBI:15379"/>
        <dbReference type="ChEBI" id="CHEBI:57618"/>
        <dbReference type="ChEBI" id="CHEBI:58210"/>
        <dbReference type="ChEBI" id="CHEBI:77688"/>
        <dbReference type="ChEBI" id="CHEBI:77992"/>
        <dbReference type="EC" id="1.14.14.88"/>
    </reaction>
</comment>
<comment type="cofactor">
    <cofactor evidence="1">
        <name>heme</name>
        <dbReference type="ChEBI" id="CHEBI:30413"/>
    </cofactor>
</comment>
<comment type="biophysicochemical properties">
    <kinetics>
        <KM evidence="4">49.7 uM for formononetin</KM>
        <KM evidence="4">112.6 uM for biochanin A</KM>
        <text evidence="4">kcat is 0.028 sec(-1) with formononetin as substrate. kcat is 0.1 sec(-1) with biochanin A as substrate.</text>
    </kinetics>
    <phDependence>
        <text evidence="4">Optimum pH is 8.0.</text>
    </phDependence>
</comment>
<comment type="subcellular location">
    <subcellularLocation>
        <location evidence="4">Endoplasmic reticulum membrane</location>
        <topology evidence="2">Single-pass membrane protein</topology>
    </subcellularLocation>
</comment>
<comment type="tissue specificity">
    <text evidence="4">Expressed constitutively in leaves and stems, but not in roots.</text>
</comment>
<comment type="induction">
    <text evidence="4">Up-regulated by methyl jasmonate and herbivory, but only weakly by elicitor.</text>
</comment>
<comment type="similarity">
    <text evidence="3">Belongs to the cytochrome P450 family.</text>
</comment>
<sequence>ALFYYSLLSLSFIITIKILLKITSRRLKNLPPGPPTIPIIGNLHHLKHPLHRTFTTLSQTYGDIFSLWFGSRLVVVVSSPSLAHECFTKNDIILANRPRFLTGKYIFYNYTTLGSASYGDHWRNLRRITTIDVLSNNRLNSFLGVRRDETNRLIQKLLKDVVSEGFGFTKVELRPRLTEMTFNAMMRMISGKRYYGDDGDVSDVEEAKQFREIISEMMSLLGANNKGDFLPLLRVVDLDNLEKRCKRIAKRSNAFLEGLIEEHRRGNIHSDGGTMIDHLLKLSESQPEYYSDHLIKGLIQGMLLAGTDTSAVTIEWVMSELLNHPEVLKKAKEELDTQIGKNKLVDEQDLSKLPYLQNIISETLRLHPPAPLLLPHYSSEDCTIGEFNVPKDTIILTNVWGIHRDPKHWNDALSFKPERFEKEEEVNKVMAFGLGRRACPGLSLAQRTVGFTVGLLIQCFEWERESEEKLDMMEGKGITMPMKIPLRAMCKALPIANDVTK</sequence>
<protein>
    <recommendedName>
        <fullName evidence="5">Isoflavone 3'-hydroxylase</fullName>
        <ecNumber evidence="4">1.14.14.88</ecNumber>
    </recommendedName>
    <alternativeName>
        <fullName evidence="5">Cytochrome P450 81E9</fullName>
    </alternativeName>
</protein>
<name>C81E9_MEDTR</name>
<reference key="1">
    <citation type="journal article" date="2003" name="Plant J.">
        <title>Regiospecific hydroxylation of isoflavones by cytochrome P450 81E enzymes from Medicago truncatula.</title>
        <authorList>
            <person name="Liu C.J."/>
            <person name="Huhman D."/>
            <person name="Sumner L.W."/>
            <person name="Dixon R.A."/>
        </authorList>
    </citation>
    <scope>NUCLEOTIDE SEQUENCE [MRNA]</scope>
    <scope>FUNCTION</scope>
    <scope>CATALYTIC ACTIVITY</scope>
    <scope>BIOPHYSICOCHEMICAL PROPERTIES</scope>
    <scope>SUBCELLULAR LOCATION</scope>
    <scope>TISSUE SPECIFICITY</scope>
    <scope>INDUCTION</scope>
</reference>
<reference key="2">
    <citation type="journal article" date="2014" name="PLoS ONE">
        <title>Finding sequences for over 270 orphan enzymes.</title>
        <authorList>
            <person name="Shearer A.G."/>
            <person name="Altman T."/>
            <person name="Rhee C.D."/>
        </authorList>
    </citation>
    <scope>IDENTIFICATION</scope>
</reference>
<feature type="chain" id="PRO_0000430744" description="Isoflavone 3'-hydroxylase">
    <location>
        <begin position="1" status="less than"/>
        <end position="501"/>
    </location>
</feature>
<feature type="transmembrane region" description="Helical" evidence="2">
    <location>
        <begin position="7"/>
        <end position="24"/>
    </location>
</feature>
<feature type="binding site" description="axial binding residue" evidence="1">
    <location>
        <position position="439"/>
    </location>
    <ligand>
        <name>heme</name>
        <dbReference type="ChEBI" id="CHEBI:30413"/>
    </ligand>
    <ligandPart>
        <name>Fe</name>
        <dbReference type="ChEBI" id="CHEBI:18248"/>
    </ligandPart>
</feature>
<feature type="non-terminal residue" evidence="6">
    <location>
        <position position="1"/>
    </location>
</feature>
<evidence type="ECO:0000250" key="1">
    <source>
        <dbReference type="UniProtKB" id="P04798"/>
    </source>
</evidence>
<evidence type="ECO:0000255" key="2"/>
<evidence type="ECO:0000255" key="3">
    <source>
        <dbReference type="RuleBase" id="RU000461"/>
    </source>
</evidence>
<evidence type="ECO:0000269" key="4">
    <source>
    </source>
</evidence>
<evidence type="ECO:0000303" key="5">
    <source>
    </source>
</evidence>
<evidence type="ECO:0000312" key="6">
    <source>
        <dbReference type="EMBL" id="AAQ20041.1"/>
    </source>
</evidence>
<proteinExistence type="evidence at protein level"/>
<gene>
    <name evidence="5" type="primary">CYP81E9</name>
</gene>
<keyword id="KW-0256">Endoplasmic reticulum</keyword>
<keyword id="KW-0349">Heme</keyword>
<keyword id="KW-0408">Iron</keyword>
<keyword id="KW-0472">Membrane</keyword>
<keyword id="KW-0479">Metal-binding</keyword>
<keyword id="KW-0503">Monooxygenase</keyword>
<keyword id="KW-0560">Oxidoreductase</keyword>
<keyword id="KW-0812">Transmembrane</keyword>
<keyword id="KW-1133">Transmembrane helix</keyword>
<dbReference type="EC" id="1.14.14.88" evidence="4"/>
<dbReference type="EMBL" id="AY278228">
    <property type="protein sequence ID" value="AAQ20041.1"/>
    <property type="molecule type" value="mRNA"/>
</dbReference>
<dbReference type="SMR" id="Q6WNQ9"/>
<dbReference type="SABIO-RK" id="Q6WNQ9"/>
<dbReference type="ExpressionAtlas" id="Q6WNQ9">
    <property type="expression patterns" value="differential"/>
</dbReference>
<dbReference type="GO" id="GO:0005789">
    <property type="term" value="C:endoplasmic reticulum membrane"/>
    <property type="evidence" value="ECO:0007669"/>
    <property type="project" value="UniProtKB-SubCell"/>
</dbReference>
<dbReference type="GO" id="GO:0020037">
    <property type="term" value="F:heme binding"/>
    <property type="evidence" value="ECO:0007669"/>
    <property type="project" value="InterPro"/>
</dbReference>
<dbReference type="GO" id="GO:0005506">
    <property type="term" value="F:iron ion binding"/>
    <property type="evidence" value="ECO:0007669"/>
    <property type="project" value="InterPro"/>
</dbReference>
<dbReference type="GO" id="GO:0048000">
    <property type="term" value="F:isoflavone 3'-hydroxylase activity"/>
    <property type="evidence" value="ECO:0007669"/>
    <property type="project" value="UniProtKB-EC"/>
</dbReference>
<dbReference type="CDD" id="cd20653">
    <property type="entry name" value="CYP81"/>
    <property type="match status" value="1"/>
</dbReference>
<dbReference type="FunFam" id="1.10.630.10:FF:000023">
    <property type="entry name" value="Cytochrome P450 family protein"/>
    <property type="match status" value="1"/>
</dbReference>
<dbReference type="Gene3D" id="1.10.630.10">
    <property type="entry name" value="Cytochrome P450"/>
    <property type="match status" value="1"/>
</dbReference>
<dbReference type="InterPro" id="IPR001128">
    <property type="entry name" value="Cyt_P450"/>
</dbReference>
<dbReference type="InterPro" id="IPR017972">
    <property type="entry name" value="Cyt_P450_CS"/>
</dbReference>
<dbReference type="InterPro" id="IPR002401">
    <property type="entry name" value="Cyt_P450_E_grp-I"/>
</dbReference>
<dbReference type="InterPro" id="IPR036396">
    <property type="entry name" value="Cyt_P450_sf"/>
</dbReference>
<dbReference type="InterPro" id="IPR050651">
    <property type="entry name" value="Plant_Cytochrome_P450_Monoox"/>
</dbReference>
<dbReference type="PANTHER" id="PTHR47947">
    <property type="entry name" value="CYTOCHROME P450 82C3-RELATED"/>
    <property type="match status" value="1"/>
</dbReference>
<dbReference type="PANTHER" id="PTHR47947:SF24">
    <property type="entry name" value="ISOFLAVONE 2'-HYDROXYLASE-LIKE"/>
    <property type="match status" value="1"/>
</dbReference>
<dbReference type="Pfam" id="PF00067">
    <property type="entry name" value="p450"/>
    <property type="match status" value="1"/>
</dbReference>
<dbReference type="PRINTS" id="PR00463">
    <property type="entry name" value="EP450I"/>
</dbReference>
<dbReference type="PRINTS" id="PR00385">
    <property type="entry name" value="P450"/>
</dbReference>
<dbReference type="SUPFAM" id="SSF48264">
    <property type="entry name" value="Cytochrome P450"/>
    <property type="match status" value="1"/>
</dbReference>
<dbReference type="PROSITE" id="PS00086">
    <property type="entry name" value="CYTOCHROME_P450"/>
    <property type="match status" value="1"/>
</dbReference>
<organism evidence="6">
    <name type="scientific">Medicago truncatula</name>
    <name type="common">Barrel medic</name>
    <name type="synonym">Medicago tribuloides</name>
    <dbReference type="NCBI Taxonomy" id="3880"/>
    <lineage>
        <taxon>Eukaryota</taxon>
        <taxon>Viridiplantae</taxon>
        <taxon>Streptophyta</taxon>
        <taxon>Embryophyta</taxon>
        <taxon>Tracheophyta</taxon>
        <taxon>Spermatophyta</taxon>
        <taxon>Magnoliopsida</taxon>
        <taxon>eudicotyledons</taxon>
        <taxon>Gunneridae</taxon>
        <taxon>Pentapetalae</taxon>
        <taxon>rosids</taxon>
        <taxon>fabids</taxon>
        <taxon>Fabales</taxon>
        <taxon>Fabaceae</taxon>
        <taxon>Papilionoideae</taxon>
        <taxon>50 kb inversion clade</taxon>
        <taxon>NPAAA clade</taxon>
        <taxon>Hologalegina</taxon>
        <taxon>IRL clade</taxon>
        <taxon>Trifolieae</taxon>
        <taxon>Medicago</taxon>
    </lineage>
</organism>